<sequence length="217" mass="24764">MRLNIAIDGPAGAGKSTIAKLVAKKFRLMYINTGAMYRAVTLMAMRQNIRANDVKKLCDLIESLSMHFENDKLIVNGEDVSEEILLPKTSQNVSDYASVLEVREKLVYLQKKMAGRYDVVMDGRDIGTVVLNDAPFKFYLTATPEERAKRRYKELSAKNIKVCYDDILNDIIRRDYIDSNREVNPLTKAYDAVEIDSSNMCIEEVVDYIVQYISKKI</sequence>
<comment type="catalytic activity">
    <reaction evidence="1">
        <text>CMP + ATP = CDP + ADP</text>
        <dbReference type="Rhea" id="RHEA:11600"/>
        <dbReference type="ChEBI" id="CHEBI:30616"/>
        <dbReference type="ChEBI" id="CHEBI:58069"/>
        <dbReference type="ChEBI" id="CHEBI:60377"/>
        <dbReference type="ChEBI" id="CHEBI:456216"/>
        <dbReference type="EC" id="2.7.4.25"/>
    </reaction>
</comment>
<comment type="catalytic activity">
    <reaction evidence="1">
        <text>dCMP + ATP = dCDP + ADP</text>
        <dbReference type="Rhea" id="RHEA:25094"/>
        <dbReference type="ChEBI" id="CHEBI:30616"/>
        <dbReference type="ChEBI" id="CHEBI:57566"/>
        <dbReference type="ChEBI" id="CHEBI:58593"/>
        <dbReference type="ChEBI" id="CHEBI:456216"/>
        <dbReference type="EC" id="2.7.4.25"/>
    </reaction>
</comment>
<comment type="subcellular location">
    <subcellularLocation>
        <location evidence="1">Cytoplasm</location>
    </subcellularLocation>
</comment>
<comment type="similarity">
    <text evidence="1">Belongs to the cytidylate kinase family. Type 1 subfamily.</text>
</comment>
<dbReference type="EC" id="2.7.4.25" evidence="1"/>
<dbReference type="EMBL" id="AE001437">
    <property type="protein sequence ID" value="AAK79812.1"/>
    <property type="molecule type" value="Genomic_DNA"/>
</dbReference>
<dbReference type="PIR" id="A97128">
    <property type="entry name" value="A97128"/>
</dbReference>
<dbReference type="RefSeq" id="NP_348472.1">
    <property type="nucleotide sequence ID" value="NC_003030.1"/>
</dbReference>
<dbReference type="RefSeq" id="WP_010965153.1">
    <property type="nucleotide sequence ID" value="NC_003030.1"/>
</dbReference>
<dbReference type="SMR" id="Q97I08"/>
<dbReference type="STRING" id="272562.CA_C1848"/>
<dbReference type="GeneID" id="44998340"/>
<dbReference type="KEGG" id="cac:CA_C1848"/>
<dbReference type="PATRIC" id="fig|272562.8.peg.2052"/>
<dbReference type="eggNOG" id="COG0283">
    <property type="taxonomic scope" value="Bacteria"/>
</dbReference>
<dbReference type="HOGENOM" id="CLU_079959_0_2_9"/>
<dbReference type="OrthoDB" id="9807434at2"/>
<dbReference type="Proteomes" id="UP000000814">
    <property type="component" value="Chromosome"/>
</dbReference>
<dbReference type="GO" id="GO:0005829">
    <property type="term" value="C:cytosol"/>
    <property type="evidence" value="ECO:0007669"/>
    <property type="project" value="TreeGrafter"/>
</dbReference>
<dbReference type="GO" id="GO:0005524">
    <property type="term" value="F:ATP binding"/>
    <property type="evidence" value="ECO:0007669"/>
    <property type="project" value="UniProtKB-UniRule"/>
</dbReference>
<dbReference type="GO" id="GO:0036430">
    <property type="term" value="F:CMP kinase activity"/>
    <property type="evidence" value="ECO:0007669"/>
    <property type="project" value="RHEA"/>
</dbReference>
<dbReference type="GO" id="GO:0036431">
    <property type="term" value="F:dCMP kinase activity"/>
    <property type="evidence" value="ECO:0007669"/>
    <property type="project" value="RHEA"/>
</dbReference>
<dbReference type="GO" id="GO:0015949">
    <property type="term" value="P:nucleobase-containing small molecule interconversion"/>
    <property type="evidence" value="ECO:0007669"/>
    <property type="project" value="TreeGrafter"/>
</dbReference>
<dbReference type="GO" id="GO:0006220">
    <property type="term" value="P:pyrimidine nucleotide metabolic process"/>
    <property type="evidence" value="ECO:0007669"/>
    <property type="project" value="UniProtKB-UniRule"/>
</dbReference>
<dbReference type="CDD" id="cd02020">
    <property type="entry name" value="CMPK"/>
    <property type="match status" value="1"/>
</dbReference>
<dbReference type="Gene3D" id="3.40.50.300">
    <property type="entry name" value="P-loop containing nucleotide triphosphate hydrolases"/>
    <property type="match status" value="1"/>
</dbReference>
<dbReference type="HAMAP" id="MF_00238">
    <property type="entry name" value="Cytidyl_kinase_type1"/>
    <property type="match status" value="1"/>
</dbReference>
<dbReference type="InterPro" id="IPR003136">
    <property type="entry name" value="Cytidylate_kin"/>
</dbReference>
<dbReference type="InterPro" id="IPR011994">
    <property type="entry name" value="Cytidylate_kinase_dom"/>
</dbReference>
<dbReference type="InterPro" id="IPR027417">
    <property type="entry name" value="P-loop_NTPase"/>
</dbReference>
<dbReference type="NCBIfam" id="TIGR00017">
    <property type="entry name" value="cmk"/>
    <property type="match status" value="1"/>
</dbReference>
<dbReference type="PANTHER" id="PTHR21299:SF2">
    <property type="entry name" value="CYTIDYLATE KINASE"/>
    <property type="match status" value="1"/>
</dbReference>
<dbReference type="PANTHER" id="PTHR21299">
    <property type="entry name" value="CYTIDYLATE KINASE/PANTOATE-BETA-ALANINE LIGASE"/>
    <property type="match status" value="1"/>
</dbReference>
<dbReference type="Pfam" id="PF02224">
    <property type="entry name" value="Cytidylate_kin"/>
    <property type="match status" value="1"/>
</dbReference>
<dbReference type="SUPFAM" id="SSF52540">
    <property type="entry name" value="P-loop containing nucleoside triphosphate hydrolases"/>
    <property type="match status" value="1"/>
</dbReference>
<proteinExistence type="inferred from homology"/>
<gene>
    <name evidence="1" type="primary">cmk</name>
    <name type="ordered locus">CA_C1848</name>
</gene>
<protein>
    <recommendedName>
        <fullName evidence="1">Cytidylate kinase</fullName>
        <shortName evidence="1">CK</shortName>
        <ecNumber evidence="1">2.7.4.25</ecNumber>
    </recommendedName>
    <alternativeName>
        <fullName evidence="1">Cytidine monophosphate kinase</fullName>
        <shortName evidence="1">CMP kinase</shortName>
    </alternativeName>
</protein>
<organism>
    <name type="scientific">Clostridium acetobutylicum (strain ATCC 824 / DSM 792 / JCM 1419 / IAM 19013 / LMG 5710 / NBRC 13948 / NRRL B-527 / VKM B-1787 / 2291 / W)</name>
    <dbReference type="NCBI Taxonomy" id="272562"/>
    <lineage>
        <taxon>Bacteria</taxon>
        <taxon>Bacillati</taxon>
        <taxon>Bacillota</taxon>
        <taxon>Clostridia</taxon>
        <taxon>Eubacteriales</taxon>
        <taxon>Clostridiaceae</taxon>
        <taxon>Clostridium</taxon>
    </lineage>
</organism>
<evidence type="ECO:0000255" key="1">
    <source>
        <dbReference type="HAMAP-Rule" id="MF_00238"/>
    </source>
</evidence>
<reference key="1">
    <citation type="journal article" date="2001" name="J. Bacteriol.">
        <title>Genome sequence and comparative analysis of the solvent-producing bacterium Clostridium acetobutylicum.</title>
        <authorList>
            <person name="Noelling J."/>
            <person name="Breton G."/>
            <person name="Omelchenko M.V."/>
            <person name="Makarova K.S."/>
            <person name="Zeng Q."/>
            <person name="Gibson R."/>
            <person name="Lee H.M."/>
            <person name="Dubois J."/>
            <person name="Qiu D."/>
            <person name="Hitti J."/>
            <person name="Wolf Y.I."/>
            <person name="Tatusov R.L."/>
            <person name="Sabathe F."/>
            <person name="Doucette-Stamm L.A."/>
            <person name="Soucaille P."/>
            <person name="Daly M.J."/>
            <person name="Bennett G.N."/>
            <person name="Koonin E.V."/>
            <person name="Smith D.R."/>
        </authorList>
    </citation>
    <scope>NUCLEOTIDE SEQUENCE [LARGE SCALE GENOMIC DNA]</scope>
    <source>
        <strain>ATCC 824 / DSM 792 / JCM 1419 / IAM 19013 / LMG 5710 / NBRC 13948 / NRRL B-527 / VKM B-1787 / 2291 / W</strain>
    </source>
</reference>
<accession>Q97I08</accession>
<keyword id="KW-0067">ATP-binding</keyword>
<keyword id="KW-0963">Cytoplasm</keyword>
<keyword id="KW-0418">Kinase</keyword>
<keyword id="KW-0547">Nucleotide-binding</keyword>
<keyword id="KW-1185">Reference proteome</keyword>
<keyword id="KW-0808">Transferase</keyword>
<feature type="chain" id="PRO_0000131904" description="Cytidylate kinase">
    <location>
        <begin position="1"/>
        <end position="217"/>
    </location>
</feature>
<feature type="binding site" evidence="1">
    <location>
        <begin position="9"/>
        <end position="17"/>
    </location>
    <ligand>
        <name>ATP</name>
        <dbReference type="ChEBI" id="CHEBI:30616"/>
    </ligand>
</feature>
<name>KCY_CLOAB</name>